<comment type="function">
    <text evidence="1">Catalyzes the GTP-dependent ribosomal translocation step during translation elongation. During this step, the ribosome changes from the pre-translocational (PRE) to the post-translocational (POST) state as the newly formed A-site-bound peptidyl-tRNA and P-site-bound deacylated tRNA move to the P and E sites, respectively. Catalyzes the coordinated movement of the two tRNA molecules, the mRNA and conformational changes in the ribosome.</text>
</comment>
<comment type="subcellular location">
    <subcellularLocation>
        <location evidence="1">Cytoplasm</location>
    </subcellularLocation>
</comment>
<comment type="similarity">
    <text evidence="1">Belongs to the TRAFAC class translation factor GTPase superfamily. Classic translation factor GTPase family. EF-G/EF-2 subfamily.</text>
</comment>
<evidence type="ECO:0000255" key="1">
    <source>
        <dbReference type="HAMAP-Rule" id="MF_00054"/>
    </source>
</evidence>
<accession>B5XJR1</accession>
<sequence length="692" mass="76440">MAREFSLAKTRNIGIMAHVDAGKTTTTERILYYTGKIHKIGETHEGASQMDWMEQEQERGITITSAATTAQWDGHRVNIIDTPGHVDFTIEVQRSLRVLDGAVTVLDSQSGVEPQTETVWRQATEYGVPRIVFANKMDKIGADFLYSVQTLHDRLQANAHPIQLPIGAEDDFRGIIDLIKMKAEIYTNDLGTDILEEDIPEEYLEQAQESREKLIEAVAETDEDLMMKYLEGEEITNDELIAGIRKATINVEFFPVLCGSAFKNKGVQLMLDAVIAYLPSPLDIPAIKGVNPDTDAEEERPASDEEPFAALAFKIMTDPFVGRLTFFRVYSGVLNSGSYVMNTSKGKRERIGRILQMHANSRQEIETVYAGDIAAAVGLKDTTTGDSLTDEKAKVILESIEVPEPVIQLMVEPKSKADQDKMGVALQKLAEEDPTFRVETNVETGETVIAGMGELHLDVLVDRMKREFKVEANVGAPQVSYRETFRASTQARGFFKRQSGGKGQFGDVWIEFTPNEEGKGFEFENAIVGGVVPREFIPAVEKGLIESMANGVLAGYPMVDVKAKLYDGSYHDVDSSETAFKIAASLALKEAAKSAQPAILEPMMLVTITAPEDNLGDVMGHVTARRGRVDGMEAHGNSQIVRAYVPLAEMFGYATVLRSATQGRGTFMMVFDHYEDVPKSVQEEIIKKTKGE</sequence>
<feature type="chain" id="PRO_1000091770" description="Elongation factor G">
    <location>
        <begin position="1"/>
        <end position="692"/>
    </location>
</feature>
<feature type="domain" description="tr-type G">
    <location>
        <begin position="8"/>
        <end position="282"/>
    </location>
</feature>
<feature type="binding site" evidence="1">
    <location>
        <begin position="17"/>
        <end position="24"/>
    </location>
    <ligand>
        <name>GTP</name>
        <dbReference type="ChEBI" id="CHEBI:37565"/>
    </ligand>
</feature>
<feature type="binding site" evidence="1">
    <location>
        <begin position="81"/>
        <end position="85"/>
    </location>
    <ligand>
        <name>GTP</name>
        <dbReference type="ChEBI" id="CHEBI:37565"/>
    </ligand>
</feature>
<feature type="binding site" evidence="1">
    <location>
        <begin position="135"/>
        <end position="138"/>
    </location>
    <ligand>
        <name>GTP</name>
        <dbReference type="ChEBI" id="CHEBI:37565"/>
    </ligand>
</feature>
<protein>
    <recommendedName>
        <fullName evidence="1">Elongation factor G</fullName>
        <shortName evidence="1">EF-G</shortName>
    </recommendedName>
</protein>
<gene>
    <name evidence="1" type="primary">fusA</name>
    <name type="ordered locus">Spy49_0233</name>
</gene>
<dbReference type="EMBL" id="CP000829">
    <property type="protein sequence ID" value="ACI60573.1"/>
    <property type="molecule type" value="Genomic_DNA"/>
</dbReference>
<dbReference type="SMR" id="B5XJR1"/>
<dbReference type="KEGG" id="soz:Spy49_0233"/>
<dbReference type="HOGENOM" id="CLU_002794_4_1_9"/>
<dbReference type="Proteomes" id="UP000001039">
    <property type="component" value="Chromosome"/>
</dbReference>
<dbReference type="GO" id="GO:0005737">
    <property type="term" value="C:cytoplasm"/>
    <property type="evidence" value="ECO:0007669"/>
    <property type="project" value="UniProtKB-SubCell"/>
</dbReference>
<dbReference type="GO" id="GO:0005525">
    <property type="term" value="F:GTP binding"/>
    <property type="evidence" value="ECO:0007669"/>
    <property type="project" value="UniProtKB-UniRule"/>
</dbReference>
<dbReference type="GO" id="GO:0003924">
    <property type="term" value="F:GTPase activity"/>
    <property type="evidence" value="ECO:0007669"/>
    <property type="project" value="InterPro"/>
</dbReference>
<dbReference type="GO" id="GO:0003746">
    <property type="term" value="F:translation elongation factor activity"/>
    <property type="evidence" value="ECO:0007669"/>
    <property type="project" value="UniProtKB-UniRule"/>
</dbReference>
<dbReference type="GO" id="GO:0032790">
    <property type="term" value="P:ribosome disassembly"/>
    <property type="evidence" value="ECO:0007669"/>
    <property type="project" value="TreeGrafter"/>
</dbReference>
<dbReference type="CDD" id="cd01886">
    <property type="entry name" value="EF-G"/>
    <property type="match status" value="1"/>
</dbReference>
<dbReference type="CDD" id="cd16262">
    <property type="entry name" value="EFG_III"/>
    <property type="match status" value="1"/>
</dbReference>
<dbReference type="CDD" id="cd01434">
    <property type="entry name" value="EFG_mtEFG1_IV"/>
    <property type="match status" value="1"/>
</dbReference>
<dbReference type="CDD" id="cd03713">
    <property type="entry name" value="EFG_mtEFG_C"/>
    <property type="match status" value="1"/>
</dbReference>
<dbReference type="CDD" id="cd04088">
    <property type="entry name" value="EFG_mtEFG_II"/>
    <property type="match status" value="1"/>
</dbReference>
<dbReference type="FunFam" id="2.40.30.10:FF:000006">
    <property type="entry name" value="Elongation factor G"/>
    <property type="match status" value="1"/>
</dbReference>
<dbReference type="FunFam" id="3.30.230.10:FF:000003">
    <property type="entry name" value="Elongation factor G"/>
    <property type="match status" value="1"/>
</dbReference>
<dbReference type="FunFam" id="3.30.70.240:FF:000001">
    <property type="entry name" value="Elongation factor G"/>
    <property type="match status" value="1"/>
</dbReference>
<dbReference type="FunFam" id="3.30.70.870:FF:000001">
    <property type="entry name" value="Elongation factor G"/>
    <property type="match status" value="1"/>
</dbReference>
<dbReference type="FunFam" id="3.40.50.300:FF:000029">
    <property type="entry name" value="Elongation factor G"/>
    <property type="match status" value="1"/>
</dbReference>
<dbReference type="Gene3D" id="3.30.230.10">
    <property type="match status" value="1"/>
</dbReference>
<dbReference type="Gene3D" id="3.30.70.240">
    <property type="match status" value="1"/>
</dbReference>
<dbReference type="Gene3D" id="3.30.70.870">
    <property type="entry name" value="Elongation Factor G (Translational Gtpase), domain 3"/>
    <property type="match status" value="1"/>
</dbReference>
<dbReference type="Gene3D" id="3.40.50.300">
    <property type="entry name" value="P-loop containing nucleotide triphosphate hydrolases"/>
    <property type="match status" value="1"/>
</dbReference>
<dbReference type="Gene3D" id="2.40.30.10">
    <property type="entry name" value="Translation factors"/>
    <property type="match status" value="1"/>
</dbReference>
<dbReference type="HAMAP" id="MF_00054_B">
    <property type="entry name" value="EF_G_EF_2_B"/>
    <property type="match status" value="1"/>
</dbReference>
<dbReference type="InterPro" id="IPR041095">
    <property type="entry name" value="EFG_II"/>
</dbReference>
<dbReference type="InterPro" id="IPR009022">
    <property type="entry name" value="EFG_III"/>
</dbReference>
<dbReference type="InterPro" id="IPR035647">
    <property type="entry name" value="EFG_III/V"/>
</dbReference>
<dbReference type="InterPro" id="IPR047872">
    <property type="entry name" value="EFG_IV"/>
</dbReference>
<dbReference type="InterPro" id="IPR035649">
    <property type="entry name" value="EFG_V"/>
</dbReference>
<dbReference type="InterPro" id="IPR000640">
    <property type="entry name" value="EFG_V-like"/>
</dbReference>
<dbReference type="InterPro" id="IPR004161">
    <property type="entry name" value="EFTu-like_2"/>
</dbReference>
<dbReference type="InterPro" id="IPR031157">
    <property type="entry name" value="G_TR_CS"/>
</dbReference>
<dbReference type="InterPro" id="IPR027417">
    <property type="entry name" value="P-loop_NTPase"/>
</dbReference>
<dbReference type="InterPro" id="IPR020568">
    <property type="entry name" value="Ribosomal_Su5_D2-typ_SF"/>
</dbReference>
<dbReference type="InterPro" id="IPR014721">
    <property type="entry name" value="Ribsml_uS5_D2-typ_fold_subgr"/>
</dbReference>
<dbReference type="InterPro" id="IPR005225">
    <property type="entry name" value="Small_GTP-bd"/>
</dbReference>
<dbReference type="InterPro" id="IPR000795">
    <property type="entry name" value="T_Tr_GTP-bd_dom"/>
</dbReference>
<dbReference type="InterPro" id="IPR009000">
    <property type="entry name" value="Transl_B-barrel_sf"/>
</dbReference>
<dbReference type="InterPro" id="IPR004540">
    <property type="entry name" value="Transl_elong_EFG/EF2"/>
</dbReference>
<dbReference type="InterPro" id="IPR005517">
    <property type="entry name" value="Transl_elong_EFG/EF2_IV"/>
</dbReference>
<dbReference type="NCBIfam" id="TIGR00484">
    <property type="entry name" value="EF-G"/>
    <property type="match status" value="1"/>
</dbReference>
<dbReference type="NCBIfam" id="NF009379">
    <property type="entry name" value="PRK12740.1-3"/>
    <property type="match status" value="1"/>
</dbReference>
<dbReference type="NCBIfam" id="NF009381">
    <property type="entry name" value="PRK12740.1-5"/>
    <property type="match status" value="1"/>
</dbReference>
<dbReference type="NCBIfam" id="TIGR00231">
    <property type="entry name" value="small_GTP"/>
    <property type="match status" value="1"/>
</dbReference>
<dbReference type="PANTHER" id="PTHR43261:SF1">
    <property type="entry name" value="RIBOSOME-RELEASING FACTOR 2, MITOCHONDRIAL"/>
    <property type="match status" value="1"/>
</dbReference>
<dbReference type="PANTHER" id="PTHR43261">
    <property type="entry name" value="TRANSLATION ELONGATION FACTOR G-RELATED"/>
    <property type="match status" value="1"/>
</dbReference>
<dbReference type="Pfam" id="PF00679">
    <property type="entry name" value="EFG_C"/>
    <property type="match status" value="1"/>
</dbReference>
<dbReference type="Pfam" id="PF14492">
    <property type="entry name" value="EFG_III"/>
    <property type="match status" value="1"/>
</dbReference>
<dbReference type="Pfam" id="PF03764">
    <property type="entry name" value="EFG_IV"/>
    <property type="match status" value="1"/>
</dbReference>
<dbReference type="Pfam" id="PF00009">
    <property type="entry name" value="GTP_EFTU"/>
    <property type="match status" value="1"/>
</dbReference>
<dbReference type="Pfam" id="PF03144">
    <property type="entry name" value="GTP_EFTU_D2"/>
    <property type="match status" value="1"/>
</dbReference>
<dbReference type="PRINTS" id="PR00315">
    <property type="entry name" value="ELONGATNFCT"/>
</dbReference>
<dbReference type="SMART" id="SM00838">
    <property type="entry name" value="EFG_C"/>
    <property type="match status" value="1"/>
</dbReference>
<dbReference type="SMART" id="SM00889">
    <property type="entry name" value="EFG_IV"/>
    <property type="match status" value="1"/>
</dbReference>
<dbReference type="SUPFAM" id="SSF54980">
    <property type="entry name" value="EF-G C-terminal domain-like"/>
    <property type="match status" value="2"/>
</dbReference>
<dbReference type="SUPFAM" id="SSF52540">
    <property type="entry name" value="P-loop containing nucleoside triphosphate hydrolases"/>
    <property type="match status" value="1"/>
</dbReference>
<dbReference type="SUPFAM" id="SSF54211">
    <property type="entry name" value="Ribosomal protein S5 domain 2-like"/>
    <property type="match status" value="1"/>
</dbReference>
<dbReference type="SUPFAM" id="SSF50447">
    <property type="entry name" value="Translation proteins"/>
    <property type="match status" value="1"/>
</dbReference>
<dbReference type="PROSITE" id="PS00301">
    <property type="entry name" value="G_TR_1"/>
    <property type="match status" value="1"/>
</dbReference>
<dbReference type="PROSITE" id="PS51722">
    <property type="entry name" value="G_TR_2"/>
    <property type="match status" value="1"/>
</dbReference>
<proteinExistence type="inferred from homology"/>
<reference key="1">
    <citation type="journal article" date="2008" name="J. Bacteriol.">
        <title>Genome sequence of a nephritogenic and highly transformable M49 strain of Streptococcus pyogenes.</title>
        <authorList>
            <person name="McShan W.M."/>
            <person name="Ferretti J.J."/>
            <person name="Karasawa T."/>
            <person name="Suvorov A.N."/>
            <person name="Lin S."/>
            <person name="Qin B."/>
            <person name="Jia H."/>
            <person name="Kenton S."/>
            <person name="Najar F."/>
            <person name="Wu H."/>
            <person name="Scott J."/>
            <person name="Roe B.A."/>
            <person name="Savic D.J."/>
        </authorList>
    </citation>
    <scope>NUCLEOTIDE SEQUENCE [LARGE SCALE GENOMIC DNA]</scope>
    <source>
        <strain>NZ131</strain>
    </source>
</reference>
<keyword id="KW-0963">Cytoplasm</keyword>
<keyword id="KW-0251">Elongation factor</keyword>
<keyword id="KW-0342">GTP-binding</keyword>
<keyword id="KW-0547">Nucleotide-binding</keyword>
<keyword id="KW-0648">Protein biosynthesis</keyword>
<name>EFG_STRPZ</name>
<organism>
    <name type="scientific">Streptococcus pyogenes serotype M49 (strain NZ131)</name>
    <dbReference type="NCBI Taxonomy" id="471876"/>
    <lineage>
        <taxon>Bacteria</taxon>
        <taxon>Bacillati</taxon>
        <taxon>Bacillota</taxon>
        <taxon>Bacilli</taxon>
        <taxon>Lactobacillales</taxon>
        <taxon>Streptococcaceae</taxon>
        <taxon>Streptococcus</taxon>
    </lineage>
</organism>